<protein>
    <recommendedName>
        <fullName evidence="1">tRNA N6-adenosine threonylcarbamoyltransferase</fullName>
        <ecNumber evidence="1">2.3.1.234</ecNumber>
    </recommendedName>
    <alternativeName>
        <fullName evidence="1">N6-L-threonylcarbamoyladenine synthase</fullName>
        <shortName evidence="1">t(6)A synthase</shortName>
    </alternativeName>
    <alternativeName>
        <fullName evidence="1">t(6)A37 threonylcarbamoyladenosine biosynthesis protein TsaD</fullName>
    </alternativeName>
    <alternativeName>
        <fullName evidence="1">tRNA threonylcarbamoyladenosine biosynthesis protein TsaD</fullName>
    </alternativeName>
</protein>
<proteinExistence type="inferred from homology"/>
<sequence>MTDRYILAVESSCDETSVAILKNESTLLSNVIASQVESHKRFGGVVPEVASRHHVEVITTCFEDALQEAGISASDLSAVAVTYGPGLVGALLVGLAAAKAFAWANHLPLIPVNHMAGHLMAAREQKPLVYPLIALLVSGGHTELVYVPEPGDYHIIGETRDDAVGEAYDKVGRVMGLTYPAGREIDQLAHKGQDTYHFPRAMITEDHLEFSFSGLKSAFINLHHNAKQKGNELILEDLCASFQAAVLDILLAKTKKALSRYPAKMLVVAGGVAANQGLRDRLAQEITHIEVVIPKLRLCGDNAGMIALAAAIEYDKQHFANMSLNAKPSLAFDQFPDSFVIN</sequence>
<organism>
    <name type="scientific">Streptococcus pyogenes serotype M28 (strain MGAS6180)</name>
    <dbReference type="NCBI Taxonomy" id="319701"/>
    <lineage>
        <taxon>Bacteria</taxon>
        <taxon>Bacillati</taxon>
        <taxon>Bacillota</taxon>
        <taxon>Bacilli</taxon>
        <taxon>Lactobacillales</taxon>
        <taxon>Streptococcaceae</taxon>
        <taxon>Streptococcus</taxon>
    </lineage>
</organism>
<evidence type="ECO:0000255" key="1">
    <source>
        <dbReference type="HAMAP-Rule" id="MF_01445"/>
    </source>
</evidence>
<keyword id="KW-0012">Acyltransferase</keyword>
<keyword id="KW-0963">Cytoplasm</keyword>
<keyword id="KW-0408">Iron</keyword>
<keyword id="KW-0479">Metal-binding</keyword>
<keyword id="KW-0808">Transferase</keyword>
<keyword id="KW-0819">tRNA processing</keyword>
<feature type="chain" id="PRO_0000303569" description="tRNA N6-adenosine threonylcarbamoyltransferase">
    <location>
        <begin position="1"/>
        <end position="342"/>
    </location>
</feature>
<feature type="binding site" evidence="1">
    <location>
        <position position="114"/>
    </location>
    <ligand>
        <name>Fe cation</name>
        <dbReference type="ChEBI" id="CHEBI:24875"/>
    </ligand>
</feature>
<feature type="binding site" evidence="1">
    <location>
        <position position="118"/>
    </location>
    <ligand>
        <name>Fe cation</name>
        <dbReference type="ChEBI" id="CHEBI:24875"/>
    </ligand>
</feature>
<feature type="binding site" evidence="1">
    <location>
        <begin position="136"/>
        <end position="140"/>
    </location>
    <ligand>
        <name>substrate</name>
    </ligand>
</feature>
<feature type="binding site" evidence="1">
    <location>
        <position position="169"/>
    </location>
    <ligand>
        <name>substrate</name>
    </ligand>
</feature>
<feature type="binding site" evidence="1">
    <location>
        <position position="182"/>
    </location>
    <ligand>
        <name>substrate</name>
    </ligand>
</feature>
<feature type="binding site" evidence="1">
    <location>
        <position position="186"/>
    </location>
    <ligand>
        <name>substrate</name>
    </ligand>
</feature>
<feature type="binding site" evidence="1">
    <location>
        <position position="275"/>
    </location>
    <ligand>
        <name>substrate</name>
    </ligand>
</feature>
<feature type="binding site" evidence="1">
    <location>
        <position position="301"/>
    </location>
    <ligand>
        <name>Fe cation</name>
        <dbReference type="ChEBI" id="CHEBI:24875"/>
    </ligand>
</feature>
<dbReference type="EC" id="2.3.1.234" evidence="1"/>
<dbReference type="EMBL" id="CP000056">
    <property type="protein sequence ID" value="AAX72693.1"/>
    <property type="molecule type" value="Genomic_DNA"/>
</dbReference>
<dbReference type="RefSeq" id="WP_011285149.1">
    <property type="nucleotide sequence ID" value="NC_007296.2"/>
</dbReference>
<dbReference type="SMR" id="Q48RG7"/>
<dbReference type="KEGG" id="spb:M28_Spy1583"/>
<dbReference type="HOGENOM" id="CLU_023208_0_2_9"/>
<dbReference type="GO" id="GO:0005737">
    <property type="term" value="C:cytoplasm"/>
    <property type="evidence" value="ECO:0007669"/>
    <property type="project" value="UniProtKB-SubCell"/>
</dbReference>
<dbReference type="GO" id="GO:0005506">
    <property type="term" value="F:iron ion binding"/>
    <property type="evidence" value="ECO:0007669"/>
    <property type="project" value="UniProtKB-UniRule"/>
</dbReference>
<dbReference type="GO" id="GO:0061711">
    <property type="term" value="F:N(6)-L-threonylcarbamoyladenine synthase activity"/>
    <property type="evidence" value="ECO:0007669"/>
    <property type="project" value="UniProtKB-EC"/>
</dbReference>
<dbReference type="GO" id="GO:0002949">
    <property type="term" value="P:tRNA threonylcarbamoyladenosine modification"/>
    <property type="evidence" value="ECO:0007669"/>
    <property type="project" value="UniProtKB-UniRule"/>
</dbReference>
<dbReference type="CDD" id="cd24133">
    <property type="entry name" value="ASKHA_NBD_TsaD_bac"/>
    <property type="match status" value="1"/>
</dbReference>
<dbReference type="FunFam" id="3.30.420.40:FF:000012">
    <property type="entry name" value="tRNA N6-adenosine threonylcarbamoyltransferase"/>
    <property type="match status" value="1"/>
</dbReference>
<dbReference type="FunFam" id="3.30.420.40:FF:000040">
    <property type="entry name" value="tRNA N6-adenosine threonylcarbamoyltransferase"/>
    <property type="match status" value="1"/>
</dbReference>
<dbReference type="Gene3D" id="3.30.420.40">
    <property type="match status" value="2"/>
</dbReference>
<dbReference type="HAMAP" id="MF_01445">
    <property type="entry name" value="TsaD"/>
    <property type="match status" value="1"/>
</dbReference>
<dbReference type="InterPro" id="IPR043129">
    <property type="entry name" value="ATPase_NBD"/>
</dbReference>
<dbReference type="InterPro" id="IPR000905">
    <property type="entry name" value="Gcp-like_dom"/>
</dbReference>
<dbReference type="InterPro" id="IPR017861">
    <property type="entry name" value="KAE1/TsaD"/>
</dbReference>
<dbReference type="InterPro" id="IPR022450">
    <property type="entry name" value="TsaD"/>
</dbReference>
<dbReference type="NCBIfam" id="TIGR00329">
    <property type="entry name" value="gcp_kae1"/>
    <property type="match status" value="1"/>
</dbReference>
<dbReference type="NCBIfam" id="TIGR03723">
    <property type="entry name" value="T6A_TsaD_YgjD"/>
    <property type="match status" value="1"/>
</dbReference>
<dbReference type="PANTHER" id="PTHR11735">
    <property type="entry name" value="TRNA N6-ADENOSINE THREONYLCARBAMOYLTRANSFERASE"/>
    <property type="match status" value="1"/>
</dbReference>
<dbReference type="PANTHER" id="PTHR11735:SF6">
    <property type="entry name" value="TRNA N6-ADENOSINE THREONYLCARBAMOYLTRANSFERASE, MITOCHONDRIAL"/>
    <property type="match status" value="1"/>
</dbReference>
<dbReference type="Pfam" id="PF00814">
    <property type="entry name" value="TsaD"/>
    <property type="match status" value="1"/>
</dbReference>
<dbReference type="PRINTS" id="PR00789">
    <property type="entry name" value="OSIALOPTASE"/>
</dbReference>
<dbReference type="SUPFAM" id="SSF53067">
    <property type="entry name" value="Actin-like ATPase domain"/>
    <property type="match status" value="1"/>
</dbReference>
<comment type="function">
    <text evidence="1">Required for the formation of a threonylcarbamoyl group on adenosine at position 37 (t(6)A37) in tRNAs that read codons beginning with adenine. Is involved in the transfer of the threonylcarbamoyl moiety of threonylcarbamoyl-AMP (TC-AMP) to the N6 group of A37, together with TsaE and TsaB. TsaD likely plays a direct catalytic role in this reaction.</text>
</comment>
<comment type="catalytic activity">
    <reaction evidence="1">
        <text>L-threonylcarbamoyladenylate + adenosine(37) in tRNA = N(6)-L-threonylcarbamoyladenosine(37) in tRNA + AMP + H(+)</text>
        <dbReference type="Rhea" id="RHEA:37059"/>
        <dbReference type="Rhea" id="RHEA-COMP:10162"/>
        <dbReference type="Rhea" id="RHEA-COMP:10163"/>
        <dbReference type="ChEBI" id="CHEBI:15378"/>
        <dbReference type="ChEBI" id="CHEBI:73682"/>
        <dbReference type="ChEBI" id="CHEBI:74411"/>
        <dbReference type="ChEBI" id="CHEBI:74418"/>
        <dbReference type="ChEBI" id="CHEBI:456215"/>
        <dbReference type="EC" id="2.3.1.234"/>
    </reaction>
</comment>
<comment type="cofactor">
    <cofactor evidence="1">
        <name>Fe(2+)</name>
        <dbReference type="ChEBI" id="CHEBI:29033"/>
    </cofactor>
    <text evidence="1">Binds 1 Fe(2+) ion per subunit.</text>
</comment>
<comment type="subcellular location">
    <subcellularLocation>
        <location evidence="1">Cytoplasm</location>
    </subcellularLocation>
</comment>
<comment type="similarity">
    <text evidence="1">Belongs to the KAE1 / TsaD family.</text>
</comment>
<accession>Q48RG7</accession>
<gene>
    <name evidence="1" type="primary">tsaD</name>
    <name type="synonym">gcp</name>
    <name type="ordered locus">M28_Spy1583</name>
</gene>
<reference key="1">
    <citation type="journal article" date="2005" name="J. Infect. Dis.">
        <title>Genome sequence of a serotype M28 strain of group A Streptococcus: potential new insights into puerperal sepsis and bacterial disease specificity.</title>
        <authorList>
            <person name="Green N.M."/>
            <person name="Zhang S."/>
            <person name="Porcella S.F."/>
            <person name="Nagiec M.J."/>
            <person name="Barbian K.D."/>
            <person name="Beres S.B."/>
            <person name="Lefebvre R.B."/>
            <person name="Musser J.M."/>
        </authorList>
    </citation>
    <scope>NUCLEOTIDE SEQUENCE [LARGE SCALE GENOMIC DNA]</scope>
    <source>
        <strain>MGAS6180</strain>
    </source>
</reference>
<name>TSAD_STRPM</name>